<proteinExistence type="inferred from homology"/>
<dbReference type="EMBL" id="AJ248283">
    <property type="protein sequence ID" value="CAB49196.1"/>
    <property type="molecule type" value="Genomic_DNA"/>
</dbReference>
<dbReference type="EMBL" id="HE613800">
    <property type="protein sequence ID" value="CCE69649.1"/>
    <property type="molecule type" value="Genomic_DNA"/>
</dbReference>
<dbReference type="PIR" id="E75218">
    <property type="entry name" value="E75218"/>
</dbReference>
<dbReference type="RefSeq" id="WP_010867396.1">
    <property type="nucleotide sequence ID" value="NC_000868.1"/>
</dbReference>
<dbReference type="SMR" id="Q9V202"/>
<dbReference type="STRING" id="272844.PAB7067"/>
<dbReference type="KEGG" id="pab:PAB7067"/>
<dbReference type="PATRIC" id="fig|272844.11.peg.292"/>
<dbReference type="eggNOG" id="arCOG04208">
    <property type="taxonomic scope" value="Archaea"/>
</dbReference>
<dbReference type="HOGENOM" id="CLU_141199_2_0_2"/>
<dbReference type="OrthoDB" id="372011at2157"/>
<dbReference type="PhylomeDB" id="Q9V202"/>
<dbReference type="Proteomes" id="UP000000810">
    <property type="component" value="Chromosome"/>
</dbReference>
<dbReference type="Proteomes" id="UP000009139">
    <property type="component" value="Chromosome"/>
</dbReference>
<dbReference type="GO" id="GO:1990904">
    <property type="term" value="C:ribonucleoprotein complex"/>
    <property type="evidence" value="ECO:0007669"/>
    <property type="project" value="UniProtKB-KW"/>
</dbReference>
<dbReference type="GO" id="GO:0005840">
    <property type="term" value="C:ribosome"/>
    <property type="evidence" value="ECO:0007669"/>
    <property type="project" value="UniProtKB-KW"/>
</dbReference>
<dbReference type="GO" id="GO:0070180">
    <property type="term" value="F:large ribosomal subunit rRNA binding"/>
    <property type="evidence" value="ECO:0007669"/>
    <property type="project" value="UniProtKB-UniRule"/>
</dbReference>
<dbReference type="GO" id="GO:0003735">
    <property type="term" value="F:structural constituent of ribosome"/>
    <property type="evidence" value="ECO:0007669"/>
    <property type="project" value="InterPro"/>
</dbReference>
<dbReference type="GO" id="GO:0008270">
    <property type="term" value="F:zinc ion binding"/>
    <property type="evidence" value="ECO:0007669"/>
    <property type="project" value="UniProtKB-UniRule"/>
</dbReference>
<dbReference type="GO" id="GO:0006412">
    <property type="term" value="P:translation"/>
    <property type="evidence" value="ECO:0007669"/>
    <property type="project" value="UniProtKB-UniRule"/>
</dbReference>
<dbReference type="Gene3D" id="2.20.25.30">
    <property type="match status" value="1"/>
</dbReference>
<dbReference type="HAMAP" id="MF_00327">
    <property type="entry name" value="Ribosomal_eL43"/>
    <property type="match status" value="1"/>
</dbReference>
<dbReference type="InterPro" id="IPR011331">
    <property type="entry name" value="Ribosomal_eL37/eL43"/>
</dbReference>
<dbReference type="InterPro" id="IPR002674">
    <property type="entry name" value="Ribosomal_eL43"/>
</dbReference>
<dbReference type="InterPro" id="IPR050522">
    <property type="entry name" value="Ribosomal_protein_eL43"/>
</dbReference>
<dbReference type="InterPro" id="IPR011332">
    <property type="entry name" value="Ribosomal_zn-bd"/>
</dbReference>
<dbReference type="NCBIfam" id="TIGR00280">
    <property type="entry name" value="eL43_euk_arch"/>
    <property type="match status" value="1"/>
</dbReference>
<dbReference type="NCBIfam" id="NF003058">
    <property type="entry name" value="PRK03976.1"/>
    <property type="match status" value="1"/>
</dbReference>
<dbReference type="PANTHER" id="PTHR48129">
    <property type="entry name" value="60S RIBOSOMAL PROTEIN L37A"/>
    <property type="match status" value="1"/>
</dbReference>
<dbReference type="PANTHER" id="PTHR48129:SF1">
    <property type="entry name" value="LARGE RIBOSOMAL SUBUNIT PROTEIN EL43"/>
    <property type="match status" value="1"/>
</dbReference>
<dbReference type="Pfam" id="PF01780">
    <property type="entry name" value="Ribosomal_L37ae"/>
    <property type="match status" value="1"/>
</dbReference>
<dbReference type="SUPFAM" id="SSF57829">
    <property type="entry name" value="Zn-binding ribosomal proteins"/>
    <property type="match status" value="1"/>
</dbReference>
<comment type="function">
    <text evidence="1">Binds to the 23S rRNA.</text>
</comment>
<comment type="cofactor">
    <cofactor evidence="1">
        <name>Zn(2+)</name>
        <dbReference type="ChEBI" id="CHEBI:29105"/>
    </cofactor>
    <text evidence="1">Binds 1 zinc ion per subunit.</text>
</comment>
<comment type="subunit">
    <text evidence="1">Part of the 50S ribosomal subunit.</text>
</comment>
<comment type="similarity">
    <text evidence="1">Belongs to the eukaryotic ribosomal protein eL43 family. Putative zinc-binding subfamily.</text>
</comment>
<organism>
    <name type="scientific">Pyrococcus abyssi (strain GE5 / Orsay)</name>
    <dbReference type="NCBI Taxonomy" id="272844"/>
    <lineage>
        <taxon>Archaea</taxon>
        <taxon>Methanobacteriati</taxon>
        <taxon>Methanobacteriota</taxon>
        <taxon>Thermococci</taxon>
        <taxon>Thermococcales</taxon>
        <taxon>Thermococcaceae</taxon>
        <taxon>Pyrococcus</taxon>
    </lineage>
</organism>
<accession>Q9V202</accession>
<accession>G8ZHQ6</accession>
<evidence type="ECO:0000255" key="1">
    <source>
        <dbReference type="HAMAP-Rule" id="MF_00327"/>
    </source>
</evidence>
<evidence type="ECO:0000305" key="2"/>
<feature type="chain" id="PRO_0000139849" description="Large ribosomal subunit protein eL43">
    <location>
        <begin position="1"/>
        <end position="83"/>
    </location>
</feature>
<feature type="zinc finger region" description="C4-type" evidence="1">
    <location>
        <begin position="38"/>
        <end position="59"/>
    </location>
</feature>
<feature type="binding site" evidence="1">
    <location>
        <position position="38"/>
    </location>
    <ligand>
        <name>Zn(2+)</name>
        <dbReference type="ChEBI" id="CHEBI:29105"/>
    </ligand>
</feature>
<feature type="binding site" evidence="1">
    <location>
        <position position="41"/>
    </location>
    <ligand>
        <name>Zn(2+)</name>
        <dbReference type="ChEBI" id="CHEBI:29105"/>
    </ligand>
</feature>
<feature type="binding site" evidence="1">
    <location>
        <position position="56"/>
    </location>
    <ligand>
        <name>Zn(2+)</name>
        <dbReference type="ChEBI" id="CHEBI:29105"/>
    </ligand>
</feature>
<feature type="binding site" evidence="1">
    <location>
        <position position="59"/>
    </location>
    <ligand>
        <name>Zn(2+)</name>
        <dbReference type="ChEBI" id="CHEBI:29105"/>
    </ligand>
</feature>
<reference key="1">
    <citation type="journal article" date="2003" name="Mol. Microbiol.">
        <title>An integrated analysis of the genome of the hyperthermophilic archaeon Pyrococcus abyssi.</title>
        <authorList>
            <person name="Cohen G.N."/>
            <person name="Barbe V."/>
            <person name="Flament D."/>
            <person name="Galperin M."/>
            <person name="Heilig R."/>
            <person name="Lecompte O."/>
            <person name="Poch O."/>
            <person name="Prieur D."/>
            <person name="Querellou J."/>
            <person name="Ripp R."/>
            <person name="Thierry J.-C."/>
            <person name="Van der Oost J."/>
            <person name="Weissenbach J."/>
            <person name="Zivanovic Y."/>
            <person name="Forterre P."/>
        </authorList>
    </citation>
    <scope>NUCLEOTIDE SEQUENCE [LARGE SCALE GENOMIC DNA]</scope>
    <source>
        <strain>GE5 / Orsay</strain>
    </source>
</reference>
<reference key="2">
    <citation type="journal article" date="2012" name="Curr. Microbiol.">
        <title>Re-annotation of two hyperthermophilic archaea Pyrococcus abyssi GE5 and Pyrococcus furiosus DSM 3638.</title>
        <authorList>
            <person name="Gao J."/>
            <person name="Wang J."/>
        </authorList>
    </citation>
    <scope>GENOME REANNOTATION</scope>
    <source>
        <strain>GE5 / Orsay</strain>
    </source>
</reference>
<sequence>MSGTKKVGSAGRFGPRYGLKIRRRVAAVEAKMRQKHVCPVCGRRAVRRISTGIWQCKKCGAIFAGGAYLPVTPAGKVAKRVVE</sequence>
<name>RL37A_PYRAB</name>
<gene>
    <name evidence="1" type="primary">rpl37ae</name>
    <name type="ordered locus">PYRAB02720</name>
    <name type="ORF">PAB7067</name>
</gene>
<keyword id="KW-0479">Metal-binding</keyword>
<keyword id="KW-0687">Ribonucleoprotein</keyword>
<keyword id="KW-0689">Ribosomal protein</keyword>
<keyword id="KW-0694">RNA-binding</keyword>
<keyword id="KW-0699">rRNA-binding</keyword>
<keyword id="KW-0862">Zinc</keyword>
<keyword id="KW-0863">Zinc-finger</keyword>
<protein>
    <recommendedName>
        <fullName evidence="1">Large ribosomal subunit protein eL43</fullName>
    </recommendedName>
    <alternativeName>
        <fullName evidence="2">50S ribosomal protein L37Ae</fullName>
    </alternativeName>
    <alternativeName>
        <fullName evidence="1">Ribosomal protein L43e</fullName>
    </alternativeName>
</protein>